<proteinExistence type="evidence at protein level"/>
<gene>
    <name type="primary">DOCK7</name>
    <name type="synonym">KIAA1771</name>
</gene>
<feature type="chain" id="PRO_0000189995" description="Dedicator of cytokinesis protein 7">
    <location>
        <begin position="1"/>
        <end position="2140"/>
    </location>
</feature>
<feature type="domain" description="C2 DOCK-type" evidence="3">
    <location>
        <begin position="561"/>
        <end position="727"/>
    </location>
</feature>
<feature type="domain" description="DOCKER" evidence="4">
    <location>
        <begin position="1678"/>
        <end position="2114"/>
    </location>
</feature>
<feature type="region of interest" description="Disordered" evidence="5">
    <location>
        <begin position="138"/>
        <end position="183"/>
    </location>
</feature>
<feature type="region of interest" description="Disordered" evidence="5">
    <location>
        <begin position="888"/>
        <end position="971"/>
    </location>
</feature>
<feature type="coiled-coil region" evidence="2">
    <location>
        <begin position="365"/>
        <end position="395"/>
    </location>
</feature>
<feature type="coiled-coil region" evidence="2">
    <location>
        <begin position="2086"/>
        <end position="2112"/>
    </location>
</feature>
<feature type="compositionally biased region" description="Low complexity" evidence="5">
    <location>
        <begin position="888"/>
        <end position="901"/>
    </location>
</feature>
<feature type="compositionally biased region" description="Polar residues" evidence="5">
    <location>
        <begin position="943"/>
        <end position="971"/>
    </location>
</feature>
<feature type="modified residue" description="Phosphoserine" evidence="18 21">
    <location>
        <position position="30"/>
    </location>
</feature>
<feature type="modified residue" description="Phosphoserine" evidence="18 20 21 23">
    <location>
        <position position="180"/>
    </location>
</feature>
<feature type="modified residue" description="Phosphoserine" evidence="18 21 23">
    <location>
        <position position="182"/>
    </location>
</feature>
<feature type="modified residue" description="N6-methyllysine" evidence="24">
    <location>
        <position position="381"/>
    </location>
</feature>
<feature type="modified residue" description="Phosphothreonine" evidence="1">
    <location>
        <position position="450"/>
    </location>
</feature>
<feature type="modified residue" description="Phosphoserine" evidence="23">
    <location>
        <position position="452"/>
    </location>
</feature>
<feature type="modified residue" description="Phosphoserine" evidence="1">
    <location>
        <position position="862"/>
    </location>
</feature>
<feature type="modified residue" description="Phosphoserine" evidence="1">
    <location>
        <position position="864"/>
    </location>
</feature>
<feature type="modified residue" description="Phosphoserine" evidence="18">
    <location>
        <position position="882"/>
    </location>
</feature>
<feature type="modified residue" description="Phosphoserine" evidence="18 25">
    <location>
        <position position="888"/>
    </location>
</feature>
<feature type="modified residue" description="Phosphoserine" evidence="20">
    <location>
        <position position="896"/>
    </location>
</feature>
<feature type="modified residue" description="Phosphoserine" evidence="18 20">
    <location>
        <position position="900"/>
    </location>
</feature>
<feature type="modified residue" description="Phosphoserine" evidence="20">
    <location>
        <position position="905"/>
    </location>
</feature>
<feature type="modified residue" description="Phosphothreonine" evidence="18 20 23">
    <location>
        <position position="907"/>
    </location>
</feature>
<feature type="modified residue" description="Phosphothreonine" evidence="20">
    <location>
        <position position="909"/>
    </location>
</feature>
<feature type="modified residue" description="Phosphoserine" evidence="18 20">
    <location>
        <position position="910"/>
    </location>
</feature>
<feature type="modified residue" description="Phosphoserine" evidence="23">
    <location>
        <position position="929"/>
    </location>
</feature>
<feature type="modified residue" description="Phosphoserine" evidence="23">
    <location>
        <position position="964"/>
    </location>
</feature>
<feature type="modified residue" description="Phosphoserine" evidence="18 22 23">
    <location>
        <position position="1383"/>
    </location>
</feature>
<feature type="modified residue" description="Phosphoserine" evidence="21">
    <location>
        <position position="1430"/>
    </location>
</feature>
<feature type="modified residue" description="Phosphoserine" evidence="18 23">
    <location>
        <position position="1432"/>
    </location>
</feature>
<feature type="modified residue" description="Phosphoserine" evidence="1">
    <location>
        <position position="1434"/>
    </location>
</feature>
<feature type="modified residue" description="Phosphoserine" evidence="20 23">
    <location>
        <position position="1438"/>
    </location>
</feature>
<feature type="modified residue" description="N6-acetyllysine" evidence="19">
    <location>
        <position position="1962"/>
    </location>
</feature>
<feature type="modified residue" description="Phosphoserine" evidence="23">
    <location>
        <position position="2129"/>
    </location>
</feature>
<feature type="splice variant" id="VSP_054534" description="In isoform 7." evidence="12">
    <original>VIFGKSSCSEFSKEAYTAVVYHNRSPDFHEEI</original>
    <variation>SPSCTHPIPTVRPLPLWCYHSIFSLLSWDFIT</variation>
    <location>
        <begin position="601"/>
        <end position="632"/>
    </location>
</feature>
<feature type="splice variant" id="VSP_054535" description="In isoform 7." evidence="12">
    <location>
        <begin position="633"/>
        <end position="2140"/>
    </location>
</feature>
<feature type="splice variant" id="VSP_012440" description="In isoform 3, isoform 4 and isoform 5." evidence="12 15">
    <location>
        <begin position="923"/>
        <end position="953"/>
    </location>
</feature>
<feature type="splice variant" id="VSP_022240" description="In isoform 2, isoform 3, isoform 4 and isoform 6." evidence="12 13 14 15">
    <location>
        <begin position="1419"/>
        <end position="1427"/>
    </location>
</feature>
<feature type="splice variant" id="VSP_007707" description="In isoform 2 and isoform 4." evidence="12 13 14 15">
    <original>STGWE</original>
    <variation>DGK</variation>
    <location>
        <begin position="1832"/>
        <end position="1836"/>
    </location>
</feature>
<feature type="sequence variant" id="VAR_057524" description="In dbSNP:rs35400360.">
    <original>I</original>
    <variation>T</variation>
    <location>
        <position position="824"/>
    </location>
</feature>
<feature type="sequence conflict" description="In Ref. 2; BAC86032." evidence="16" ref="2">
    <original>H</original>
    <variation>R</variation>
    <location>
        <position position="750"/>
    </location>
</feature>
<feature type="sequence conflict" description="In Ref. 2; BAC86032." evidence="16" ref="2">
    <original>E</original>
    <variation>G</variation>
    <location>
        <position position="1440"/>
    </location>
</feature>
<feature type="sequence conflict" description="In Ref. 2; BAB70933." evidence="16" ref="2">
    <original>S</original>
    <variation>N</variation>
    <location>
        <position position="1520"/>
    </location>
</feature>
<feature type="sequence conflict" description="In Ref. 2; BAC86032." evidence="16" ref="2">
    <original>A</original>
    <variation>V</variation>
    <location>
        <position position="1521"/>
    </location>
</feature>
<feature type="sequence conflict" description="In Ref. 2; BAC86032." evidence="16" ref="2">
    <original>P</original>
    <variation>L</variation>
    <location>
        <position position="1639"/>
    </location>
</feature>
<feature type="sequence conflict" description="In Ref. 2; BAB70933." evidence="16" ref="2">
    <original>E</original>
    <variation>K</variation>
    <location>
        <position position="1859"/>
    </location>
</feature>
<feature type="sequence conflict" description="In Ref. 2; BAB71042." evidence="16" ref="2">
    <original>K</original>
    <variation>T</variation>
    <location>
        <position position="1908"/>
    </location>
</feature>
<feature type="strand" evidence="27">
    <location>
        <begin position="1841"/>
        <end position="1849"/>
    </location>
</feature>
<feature type="helix" evidence="27">
    <location>
        <begin position="1850"/>
        <end position="1855"/>
    </location>
</feature>
<feature type="strand" evidence="27">
    <location>
        <begin position="1858"/>
        <end position="1864"/>
    </location>
</feature>
<feature type="helix" evidence="27">
    <location>
        <begin position="1870"/>
        <end position="1885"/>
    </location>
</feature>
<feature type="helix" evidence="27">
    <location>
        <begin position="1887"/>
        <end position="1889"/>
    </location>
</feature>
<feature type="strand" evidence="27">
    <location>
        <begin position="1890"/>
        <end position="1893"/>
    </location>
</feature>
<feature type="strand" evidence="27">
    <location>
        <begin position="1908"/>
        <end position="1918"/>
    </location>
</feature>
<feature type="helix" evidence="27">
    <location>
        <begin position="1922"/>
        <end position="1930"/>
    </location>
</feature>
<feature type="strand" evidence="27">
    <location>
        <begin position="1938"/>
        <end position="1947"/>
    </location>
</feature>
<feature type="strand" evidence="26">
    <location>
        <begin position="1951"/>
        <end position="1953"/>
    </location>
</feature>
<feature type="turn" evidence="27">
    <location>
        <begin position="1957"/>
        <end position="1959"/>
    </location>
</feature>
<feature type="strand" evidence="27">
    <location>
        <begin position="1961"/>
        <end position="1974"/>
    </location>
</feature>
<feature type="strand" evidence="27">
    <location>
        <begin position="1976"/>
        <end position="1990"/>
    </location>
</feature>
<feature type="helix" evidence="27">
    <location>
        <begin position="1992"/>
        <end position="2011"/>
    </location>
</feature>
<feature type="helix" evidence="27">
    <location>
        <begin position="2018"/>
        <end position="2029"/>
    </location>
</feature>
<feature type="strand" evidence="27">
    <location>
        <begin position="2032"/>
        <end position="2034"/>
    </location>
</feature>
<feature type="helix" evidence="27">
    <location>
        <begin position="2038"/>
        <end position="2044"/>
    </location>
</feature>
<feature type="strand" evidence="27">
    <location>
        <begin position="2045"/>
        <end position="2047"/>
    </location>
</feature>
<feature type="helix" evidence="27">
    <location>
        <begin position="2052"/>
        <end position="2082"/>
    </location>
</feature>
<feature type="helix" evidence="27">
    <location>
        <begin position="2085"/>
        <end position="2087"/>
    </location>
</feature>
<feature type="helix" evidence="27">
    <location>
        <begin position="2088"/>
        <end position="2109"/>
    </location>
</feature>
<feature type="modified residue" description="Phosphoserine" evidence="18">
    <location sequence="Q96N67-2">
        <position position="1421"/>
    </location>
</feature>
<feature type="modified residue" description="Phosphoserine" evidence="18">
    <location sequence="Q96N67-2">
        <position position="1425"/>
    </location>
</feature>
<feature type="modified residue" description="Phosphoserine" evidence="17 18">
    <location sequence="Q96N67-2">
        <position position="1429"/>
    </location>
</feature>
<feature type="modified residue" description="Phosphoserine" evidence="18">
    <location sequence="Q96N67-3">
        <position position="1390"/>
    </location>
</feature>
<feature type="modified residue" description="Phosphoserine" evidence="18">
    <location sequence="Q96N67-3">
        <position position="1394"/>
    </location>
</feature>
<feature type="modified residue" description="Phosphoserine" evidence="17 18">
    <location sequence="Q96N67-3">
        <position position="1398"/>
    </location>
</feature>
<feature type="modified residue" description="Phosphoserine" evidence="18">
    <location sequence="Q96N67-4">
        <position position="1390"/>
    </location>
</feature>
<feature type="modified residue" description="Phosphoserine" evidence="18">
    <location sequence="Q96N67-4">
        <position position="1394"/>
    </location>
</feature>
<feature type="modified residue" description="Phosphoserine" evidence="17 18">
    <location sequence="Q96N67-4">
        <position position="1398"/>
    </location>
</feature>
<feature type="modified residue" description="Phosphoserine" evidence="18">
    <location sequence="Q96N67-6">
        <position position="1421"/>
    </location>
</feature>
<feature type="modified residue" description="Phosphoserine" evidence="18">
    <location sequence="Q96N67-6">
        <position position="1425"/>
    </location>
</feature>
<feature type="modified residue" description="Phosphoserine" evidence="17 18">
    <location sequence="Q96N67-6">
        <position position="1429"/>
    </location>
</feature>
<dbReference type="EMBL" id="DQ341187">
    <property type="protein sequence ID" value="ABC68221.1"/>
    <property type="molecule type" value="mRNA"/>
</dbReference>
<dbReference type="EMBL" id="AK055401">
    <property type="protein sequence ID" value="BAB70917.1"/>
    <property type="molecule type" value="mRNA"/>
</dbReference>
<dbReference type="EMBL" id="AK055493">
    <property type="protein sequence ID" value="BAB70933.1"/>
    <property type="status" value="ALT_INIT"/>
    <property type="molecule type" value="mRNA"/>
</dbReference>
<dbReference type="EMBL" id="AK055905">
    <property type="protein sequence ID" value="BAB71042.1"/>
    <property type="status" value="ALT_FRAME"/>
    <property type="molecule type" value="mRNA"/>
</dbReference>
<dbReference type="EMBL" id="AK125049">
    <property type="protein sequence ID" value="BAC86032.1"/>
    <property type="status" value="ALT_INIT"/>
    <property type="molecule type" value="mRNA"/>
</dbReference>
<dbReference type="EMBL" id="AK292640">
    <property type="protein sequence ID" value="BAF85329.1"/>
    <property type="molecule type" value="mRNA"/>
</dbReference>
<dbReference type="EMBL" id="AC096946">
    <property type="status" value="NOT_ANNOTATED_CDS"/>
    <property type="molecule type" value="Genomic_DNA"/>
</dbReference>
<dbReference type="EMBL" id="AC103923">
    <property type="status" value="NOT_ANNOTATED_CDS"/>
    <property type="molecule type" value="Genomic_DNA"/>
</dbReference>
<dbReference type="EMBL" id="AL138847">
    <property type="status" value="NOT_ANNOTATED_CDS"/>
    <property type="molecule type" value="Genomic_DNA"/>
</dbReference>
<dbReference type="EMBL" id="AL451044">
    <property type="status" value="NOT_ANNOTATED_CDS"/>
    <property type="molecule type" value="Genomic_DNA"/>
</dbReference>
<dbReference type="EMBL" id="CH471059">
    <property type="protein sequence ID" value="EAX06582.1"/>
    <property type="molecule type" value="Genomic_DNA"/>
</dbReference>
<dbReference type="EMBL" id="DQ309763">
    <property type="protein sequence ID" value="ABC33725.1"/>
    <property type="status" value="ALT_FRAME"/>
    <property type="molecule type" value="mRNA"/>
</dbReference>
<dbReference type="EMBL" id="DQ118679">
    <property type="protein sequence ID" value="AAZ38451.1"/>
    <property type="molecule type" value="mRNA"/>
</dbReference>
<dbReference type="EMBL" id="DQ118680">
    <property type="protein sequence ID" value="AAZ38452.1"/>
    <property type="molecule type" value="mRNA"/>
</dbReference>
<dbReference type="EMBL" id="AB051558">
    <property type="protein sequence ID" value="BAB21862.1"/>
    <property type="molecule type" value="mRNA"/>
</dbReference>
<dbReference type="EMBL" id="BC016392">
    <property type="protein sequence ID" value="AAH16392.2"/>
    <property type="status" value="ALT_FRAME"/>
    <property type="molecule type" value="mRNA"/>
</dbReference>
<dbReference type="CCDS" id="CCDS30734.1">
    <molecule id="Q96N67-5"/>
</dbReference>
<dbReference type="CCDS" id="CCDS60156.1">
    <molecule id="Q96N67-2"/>
</dbReference>
<dbReference type="CCDS" id="CCDS60157.1">
    <molecule id="Q96N67-7"/>
</dbReference>
<dbReference type="CCDS" id="CCDS81335.1">
    <molecule id="Q96N67-4"/>
</dbReference>
<dbReference type="CCDS" id="CCDS81336.1">
    <molecule id="Q96N67-3"/>
</dbReference>
<dbReference type="CCDS" id="CCDS81338.1">
    <molecule id="Q96N67-6"/>
</dbReference>
<dbReference type="CCDS" id="CCDS90964.1">
    <molecule id="Q96N67-1"/>
</dbReference>
<dbReference type="RefSeq" id="NP_001258928.1">
    <molecule id="Q96N67-2"/>
    <property type="nucleotide sequence ID" value="NM_001271999.2"/>
</dbReference>
<dbReference type="RefSeq" id="NP_001258929.1">
    <molecule id="Q96N67-3"/>
    <property type="nucleotide sequence ID" value="NM_001272000.2"/>
</dbReference>
<dbReference type="RefSeq" id="NP_001258930.1">
    <molecule id="Q96N67-4"/>
    <property type="nucleotide sequence ID" value="NM_001272001.2"/>
</dbReference>
<dbReference type="RefSeq" id="NP_001258931.1">
    <molecule id="Q96N67-7"/>
    <property type="nucleotide sequence ID" value="NM_001272002.2"/>
</dbReference>
<dbReference type="RefSeq" id="NP_001317543.1">
    <molecule id="Q96N67-6"/>
    <property type="nucleotide sequence ID" value="NM_001330614.2"/>
</dbReference>
<dbReference type="RefSeq" id="NP_001354490.1">
    <molecule id="Q96N67-1"/>
    <property type="nucleotide sequence ID" value="NM_001367561.1"/>
</dbReference>
<dbReference type="RefSeq" id="NP_212132.2">
    <molecule id="Q96N67-5"/>
    <property type="nucleotide sequence ID" value="NM_033407.4"/>
</dbReference>
<dbReference type="RefSeq" id="XP_011540628.1">
    <property type="nucleotide sequence ID" value="XM_011542326.2"/>
</dbReference>
<dbReference type="PDB" id="6AJ4">
    <property type="method" value="X-ray"/>
    <property type="resolution" value="3.26 A"/>
    <property type="chains" value="A/C/E/G=1832-2114"/>
</dbReference>
<dbReference type="PDB" id="6AJL">
    <property type="method" value="X-ray"/>
    <property type="resolution" value="3.23 A"/>
    <property type="chains" value="A/C/E/G=1832-2114"/>
</dbReference>
<dbReference type="PDBsum" id="6AJ4"/>
<dbReference type="PDBsum" id="6AJL"/>
<dbReference type="SMR" id="Q96N67"/>
<dbReference type="BioGRID" id="124527">
    <property type="interactions" value="282"/>
</dbReference>
<dbReference type="ComplexPortal" id="CPX-7725">
    <property type="entry name" value="DISP septin regulator complex"/>
</dbReference>
<dbReference type="CORUM" id="Q96N67"/>
<dbReference type="ELM" id="Q96N67"/>
<dbReference type="FunCoup" id="Q96N67">
    <property type="interactions" value="1619"/>
</dbReference>
<dbReference type="IntAct" id="Q96N67">
    <property type="interactions" value="142"/>
</dbReference>
<dbReference type="MINT" id="Q96N67"/>
<dbReference type="STRING" id="9606.ENSP00000251157"/>
<dbReference type="GlyCosmos" id="Q96N67">
    <property type="glycosylation" value="1 site, 1 glycan"/>
</dbReference>
<dbReference type="GlyGen" id="Q96N67">
    <property type="glycosylation" value="1 site, 1 O-linked glycan (1 site)"/>
</dbReference>
<dbReference type="iPTMnet" id="Q96N67"/>
<dbReference type="MetOSite" id="Q96N67"/>
<dbReference type="PhosphoSitePlus" id="Q96N67"/>
<dbReference type="SwissPalm" id="Q96N67"/>
<dbReference type="BioMuta" id="DOCK7"/>
<dbReference type="DMDM" id="122065170"/>
<dbReference type="CPTAC" id="CPTAC-1729"/>
<dbReference type="CPTAC" id="CPTAC-1730"/>
<dbReference type="CPTAC" id="CPTAC-1731"/>
<dbReference type="CPTAC" id="CPTAC-1732"/>
<dbReference type="jPOST" id="Q96N67"/>
<dbReference type="MassIVE" id="Q96N67"/>
<dbReference type="PaxDb" id="9606-ENSP00000251157"/>
<dbReference type="PeptideAtlas" id="Q96N67"/>
<dbReference type="ProteomicsDB" id="77473">
    <molecule id="Q96N67-1"/>
</dbReference>
<dbReference type="ProteomicsDB" id="77474">
    <molecule id="Q96N67-2"/>
</dbReference>
<dbReference type="ProteomicsDB" id="77475">
    <molecule id="Q96N67-3"/>
</dbReference>
<dbReference type="ProteomicsDB" id="77476">
    <molecule id="Q96N67-4"/>
</dbReference>
<dbReference type="ProteomicsDB" id="77477">
    <molecule id="Q96N67-5"/>
</dbReference>
<dbReference type="ProteomicsDB" id="77478">
    <molecule id="Q96N67-6"/>
</dbReference>
<dbReference type="ProteomicsDB" id="77516"/>
<dbReference type="Pumba" id="Q96N67"/>
<dbReference type="Antibodypedia" id="1929">
    <property type="antibodies" value="115 antibodies from 21 providers"/>
</dbReference>
<dbReference type="DNASU" id="85440"/>
<dbReference type="Ensembl" id="ENST00000251157.10">
    <molecule id="Q96N67-6"/>
    <property type="protein sequence ID" value="ENSP00000251157.6"/>
    <property type="gene ID" value="ENSG00000116641.18"/>
</dbReference>
<dbReference type="Ensembl" id="ENST00000340370.10">
    <molecule id="Q96N67-5"/>
    <property type="protein sequence ID" value="ENSP00000340742.5"/>
    <property type="gene ID" value="ENSG00000116641.18"/>
</dbReference>
<dbReference type="Ensembl" id="ENST00000404627.3">
    <molecule id="Q96N67-7"/>
    <property type="protein sequence ID" value="ENSP00000384446.2"/>
    <property type="gene ID" value="ENSG00000116641.18"/>
</dbReference>
<dbReference type="Ensembl" id="ENST00000454575.6">
    <molecule id="Q96N67-2"/>
    <property type="protein sequence ID" value="ENSP00000413583.2"/>
    <property type="gene ID" value="ENSG00000116641.18"/>
</dbReference>
<dbReference type="Ensembl" id="ENST00000634264.1">
    <molecule id="Q96N67-3"/>
    <property type="protein sequence ID" value="ENSP00000489284.1"/>
    <property type="gene ID" value="ENSG00000116641.18"/>
</dbReference>
<dbReference type="Ensembl" id="ENST00000635123.1">
    <molecule id="Q96N67-4"/>
    <property type="protein sequence ID" value="ENSP00000489499.1"/>
    <property type="gene ID" value="ENSG00000116641.18"/>
</dbReference>
<dbReference type="Ensembl" id="ENST00000635253.2">
    <molecule id="Q96N67-1"/>
    <property type="protein sequence ID" value="ENSP00000489124.1"/>
    <property type="gene ID" value="ENSG00000116641.18"/>
</dbReference>
<dbReference type="GeneID" id="85440"/>
<dbReference type="KEGG" id="hsa:85440"/>
<dbReference type="MANE-Select" id="ENST00000635253.2">
    <property type="protein sequence ID" value="ENSP00000489124.1"/>
    <property type="RefSeq nucleotide sequence ID" value="NM_001367561.1"/>
    <property type="RefSeq protein sequence ID" value="NP_001354490.1"/>
</dbReference>
<dbReference type="UCSC" id="uc001dap.5">
    <molecule id="Q96N67-1"/>
    <property type="organism name" value="human"/>
</dbReference>
<dbReference type="AGR" id="HGNC:19190"/>
<dbReference type="CTD" id="85440"/>
<dbReference type="DisGeNET" id="85440"/>
<dbReference type="GeneCards" id="DOCK7"/>
<dbReference type="HGNC" id="HGNC:19190">
    <property type="gene designation" value="DOCK7"/>
</dbReference>
<dbReference type="HPA" id="ENSG00000116641">
    <property type="expression patterns" value="Low tissue specificity"/>
</dbReference>
<dbReference type="MalaCards" id="DOCK7"/>
<dbReference type="MIM" id="615730">
    <property type="type" value="gene"/>
</dbReference>
<dbReference type="MIM" id="615859">
    <property type="type" value="phenotype"/>
</dbReference>
<dbReference type="neXtProt" id="NX_Q96N67"/>
<dbReference type="OpenTargets" id="ENSG00000116641"/>
<dbReference type="Orphanet" id="411986">
    <property type="disease" value="Early-onset epileptic encephalopathy-cortical blindness-intellectual disability-facial dysmorphism syndrome"/>
</dbReference>
<dbReference type="PharmGKB" id="PA134872825"/>
<dbReference type="VEuPathDB" id="HostDB:ENSG00000116641"/>
<dbReference type="eggNOG" id="KOG1997">
    <property type="taxonomic scope" value="Eukaryota"/>
</dbReference>
<dbReference type="GeneTree" id="ENSGT00940000155661"/>
<dbReference type="HOGENOM" id="CLU_000624_0_0_1"/>
<dbReference type="InParanoid" id="Q96N67"/>
<dbReference type="OMA" id="FPHQFND"/>
<dbReference type="OrthoDB" id="47328at2759"/>
<dbReference type="PAN-GO" id="Q96N67">
    <property type="GO annotations" value="3 GO annotations based on evolutionary models"/>
</dbReference>
<dbReference type="PhylomeDB" id="Q96N67"/>
<dbReference type="TreeFam" id="TF313629"/>
<dbReference type="PathwayCommons" id="Q96N67"/>
<dbReference type="Reactome" id="R-HSA-8875555">
    <property type="pathway name" value="MET activates RAP1 and RAC1"/>
</dbReference>
<dbReference type="Reactome" id="R-HSA-9013148">
    <property type="pathway name" value="CDC42 GTPase cycle"/>
</dbReference>
<dbReference type="Reactome" id="R-HSA-9013149">
    <property type="pathway name" value="RAC1 GTPase cycle"/>
</dbReference>
<dbReference type="Reactome" id="R-HSA-983231">
    <property type="pathway name" value="Factors involved in megakaryocyte development and platelet production"/>
</dbReference>
<dbReference type="SignaLink" id="Q96N67"/>
<dbReference type="SIGNOR" id="Q96N67"/>
<dbReference type="BioGRID-ORCS" id="85440">
    <property type="hits" value="73 hits in 1157 CRISPR screens"/>
</dbReference>
<dbReference type="ChiTaRS" id="DOCK7">
    <property type="organism name" value="human"/>
</dbReference>
<dbReference type="GeneWiki" id="Dock7"/>
<dbReference type="GenomeRNAi" id="85440"/>
<dbReference type="Pharos" id="Q96N67">
    <property type="development level" value="Tbio"/>
</dbReference>
<dbReference type="PRO" id="PR:Q96N67"/>
<dbReference type="Proteomes" id="UP000005640">
    <property type="component" value="Chromosome 1"/>
</dbReference>
<dbReference type="RNAct" id="Q96N67">
    <property type="molecule type" value="protein"/>
</dbReference>
<dbReference type="Bgee" id="ENSG00000116641">
    <property type="expression patterns" value="Expressed in ventricular zone and 185 other cell types or tissues"/>
</dbReference>
<dbReference type="ExpressionAtlas" id="Q96N67">
    <property type="expression patterns" value="baseline and differential"/>
</dbReference>
<dbReference type="GO" id="GO:0030424">
    <property type="term" value="C:axon"/>
    <property type="evidence" value="ECO:0000304"/>
    <property type="project" value="BHF-UCL"/>
</dbReference>
<dbReference type="GO" id="GO:0045178">
    <property type="term" value="C:basal part of cell"/>
    <property type="evidence" value="ECO:0000304"/>
    <property type="project" value="BHF-UCL"/>
</dbReference>
<dbReference type="GO" id="GO:0005925">
    <property type="term" value="C:focal adhesion"/>
    <property type="evidence" value="ECO:0007005"/>
    <property type="project" value="UniProtKB"/>
</dbReference>
<dbReference type="GO" id="GO:0030426">
    <property type="term" value="C:growth cone"/>
    <property type="evidence" value="ECO:0000304"/>
    <property type="project" value="BHF-UCL"/>
</dbReference>
<dbReference type="GO" id="GO:0043005">
    <property type="term" value="C:neuron projection"/>
    <property type="evidence" value="ECO:0000304"/>
    <property type="project" value="BHF-UCL"/>
</dbReference>
<dbReference type="GO" id="GO:0005096">
    <property type="term" value="F:GTPase activator activity"/>
    <property type="evidence" value="ECO:0000314"/>
    <property type="project" value="BHF-UCL"/>
</dbReference>
<dbReference type="GO" id="GO:0005085">
    <property type="term" value="F:guanyl-nucleotide exchange factor activity"/>
    <property type="evidence" value="ECO:0000318"/>
    <property type="project" value="GO_Central"/>
</dbReference>
<dbReference type="GO" id="GO:0031267">
    <property type="term" value="F:small GTPase binding"/>
    <property type="evidence" value="ECO:0000314"/>
    <property type="project" value="BHF-UCL"/>
</dbReference>
<dbReference type="GO" id="GO:0007409">
    <property type="term" value="P:axonogenesis"/>
    <property type="evidence" value="ECO:0000315"/>
    <property type="project" value="BHF-UCL"/>
</dbReference>
<dbReference type="GO" id="GO:0045200">
    <property type="term" value="P:establishment of neuroblast polarity"/>
    <property type="evidence" value="ECO:0000315"/>
    <property type="project" value="BHF-UCL"/>
</dbReference>
<dbReference type="GO" id="GO:0022027">
    <property type="term" value="P:interkinetic nuclear migration"/>
    <property type="evidence" value="ECO:0000250"/>
    <property type="project" value="UniProtKB"/>
</dbReference>
<dbReference type="GO" id="GO:0000226">
    <property type="term" value="P:microtubule cytoskeleton organization"/>
    <property type="evidence" value="ECO:0000315"/>
    <property type="project" value="BHF-UCL"/>
</dbReference>
<dbReference type="GO" id="GO:0120163">
    <property type="term" value="P:negative regulation of cold-induced thermogenesis"/>
    <property type="evidence" value="ECO:0000250"/>
    <property type="project" value="YuBioLab"/>
</dbReference>
<dbReference type="GO" id="GO:0031175">
    <property type="term" value="P:neuron projection development"/>
    <property type="evidence" value="ECO:0000315"/>
    <property type="project" value="BHF-UCL"/>
</dbReference>
<dbReference type="GO" id="GO:1904754">
    <property type="term" value="P:positive regulation of vascular associated smooth muscle cell migration"/>
    <property type="evidence" value="ECO:0000315"/>
    <property type="project" value="BHF-UCL"/>
</dbReference>
<dbReference type="GO" id="GO:0016601">
    <property type="term" value="P:Rac protein signal transduction"/>
    <property type="evidence" value="ECO:0000315"/>
    <property type="project" value="BHF-UCL"/>
</dbReference>
<dbReference type="GO" id="GO:0050767">
    <property type="term" value="P:regulation of neurogenesis"/>
    <property type="evidence" value="ECO:0000250"/>
    <property type="project" value="UniProtKB"/>
</dbReference>
<dbReference type="GO" id="GO:0035023">
    <property type="term" value="P:regulation of Rho protein signal transduction"/>
    <property type="evidence" value="ECO:0000318"/>
    <property type="project" value="GO_Central"/>
</dbReference>
<dbReference type="CDD" id="cd08696">
    <property type="entry name" value="C2_Dock-C"/>
    <property type="match status" value="1"/>
</dbReference>
<dbReference type="CDD" id="cd11703">
    <property type="entry name" value="DHR2_DOCK7"/>
    <property type="match status" value="1"/>
</dbReference>
<dbReference type="FunFam" id="1.20.58.740:FF:000002">
    <property type="entry name" value="Dedicator of cytokinesis protein 7"/>
    <property type="match status" value="1"/>
</dbReference>
<dbReference type="FunFam" id="1.25.40.410:FF:000002">
    <property type="entry name" value="Dedicator of cytokinesis protein 7"/>
    <property type="match status" value="1"/>
</dbReference>
<dbReference type="FunFam" id="2.60.40.150:FF:000022">
    <property type="entry name" value="Dedicator of cytokinesis protein 7"/>
    <property type="match status" value="1"/>
</dbReference>
<dbReference type="Gene3D" id="1.20.58.740">
    <property type="match status" value="1"/>
</dbReference>
<dbReference type="Gene3D" id="1.25.40.410">
    <property type="match status" value="1"/>
</dbReference>
<dbReference type="Gene3D" id="2.60.40.150">
    <property type="entry name" value="C2 domain"/>
    <property type="match status" value="1"/>
</dbReference>
<dbReference type="InterPro" id="IPR037808">
    <property type="entry name" value="C2_Dock-C"/>
</dbReference>
<dbReference type="InterPro" id="IPR027007">
    <property type="entry name" value="C2_DOCK-type_domain"/>
</dbReference>
<dbReference type="InterPro" id="IPR035892">
    <property type="entry name" value="C2_domain_sf"/>
</dbReference>
<dbReference type="InterPro" id="IPR026791">
    <property type="entry name" value="DOCK"/>
</dbReference>
<dbReference type="InterPro" id="IPR021816">
    <property type="entry name" value="DOCK_C/D_N"/>
</dbReference>
<dbReference type="InterPro" id="IPR043161">
    <property type="entry name" value="DOCK_C_lobe_A"/>
</dbReference>
<dbReference type="InterPro" id="IPR043162">
    <property type="entry name" value="DOCK_C_lobe_C"/>
</dbReference>
<dbReference type="InterPro" id="IPR027357">
    <property type="entry name" value="DOCKER_dom"/>
</dbReference>
<dbReference type="InterPro" id="IPR046769">
    <property type="entry name" value="DOCKER_Lobe_A"/>
</dbReference>
<dbReference type="InterPro" id="IPR046770">
    <property type="entry name" value="DOCKER_Lobe_B"/>
</dbReference>
<dbReference type="InterPro" id="IPR046773">
    <property type="entry name" value="DOCKER_Lobe_C"/>
</dbReference>
<dbReference type="PANTHER" id="PTHR23317">
    <property type="entry name" value="DEDICATOR OF CYTOKINESIS DOCK"/>
    <property type="match status" value="1"/>
</dbReference>
<dbReference type="PANTHER" id="PTHR23317:SF78">
    <property type="entry name" value="DEDICATOR OF CYTOKINESIS PROTEIN 7"/>
    <property type="match status" value="1"/>
</dbReference>
<dbReference type="Pfam" id="PF06920">
    <property type="entry name" value="DHR-2_Lobe_A"/>
    <property type="match status" value="1"/>
</dbReference>
<dbReference type="Pfam" id="PF20422">
    <property type="entry name" value="DHR-2_Lobe_B"/>
    <property type="match status" value="1"/>
</dbReference>
<dbReference type="Pfam" id="PF20421">
    <property type="entry name" value="DHR-2_Lobe_C"/>
    <property type="match status" value="1"/>
</dbReference>
<dbReference type="Pfam" id="PF14429">
    <property type="entry name" value="DOCK-C2"/>
    <property type="match status" value="1"/>
</dbReference>
<dbReference type="Pfam" id="PF11878">
    <property type="entry name" value="DOCK_C-D_N"/>
    <property type="match status" value="1"/>
</dbReference>
<dbReference type="PROSITE" id="PS51650">
    <property type="entry name" value="C2_DOCK"/>
    <property type="match status" value="1"/>
</dbReference>
<dbReference type="PROSITE" id="PS51651">
    <property type="entry name" value="DOCKER"/>
    <property type="match status" value="1"/>
</dbReference>
<reference key="1">
    <citation type="journal article" date="2006" name="Neuron">
        <title>The Rac activator DOCK7 regulates neuronal polarity through local phosphorylation of stathmin/Op18.</title>
        <authorList>
            <person name="Watabe-Uchida M."/>
            <person name="John K.A."/>
            <person name="Janas J.A."/>
            <person name="Newey S.E."/>
            <person name="Van Aelst L."/>
        </authorList>
    </citation>
    <scope>NUCLEOTIDE SEQUENCE [MRNA] (ISOFORM 2)</scope>
    <scope>INTERACTION WITH RAC1 AND RAC3</scope>
    <scope>FUNCTION</scope>
    <scope>SUBCELLULAR LOCATION</scope>
    <scope>DOMAIN DOCKER</scope>
    <source>
        <tissue>Fetal brain</tissue>
    </source>
</reference>
<reference key="2">
    <citation type="journal article" date="2004" name="Nat. Genet.">
        <title>Complete sequencing and characterization of 21,243 full-length human cDNAs.</title>
        <authorList>
            <person name="Ota T."/>
            <person name="Suzuki Y."/>
            <person name="Nishikawa T."/>
            <person name="Otsuki T."/>
            <person name="Sugiyama T."/>
            <person name="Irie R."/>
            <person name="Wakamatsu A."/>
            <person name="Hayashi K."/>
            <person name="Sato H."/>
            <person name="Nagai K."/>
            <person name="Kimura K."/>
            <person name="Makita H."/>
            <person name="Sekine M."/>
            <person name="Obayashi M."/>
            <person name="Nishi T."/>
            <person name="Shibahara T."/>
            <person name="Tanaka T."/>
            <person name="Ishii S."/>
            <person name="Yamamoto J."/>
            <person name="Saito K."/>
            <person name="Kawai Y."/>
            <person name="Isono Y."/>
            <person name="Nakamura Y."/>
            <person name="Nagahari K."/>
            <person name="Murakami K."/>
            <person name="Yasuda T."/>
            <person name="Iwayanagi T."/>
            <person name="Wagatsuma M."/>
            <person name="Shiratori A."/>
            <person name="Sudo H."/>
            <person name="Hosoiri T."/>
            <person name="Kaku Y."/>
            <person name="Kodaira H."/>
            <person name="Kondo H."/>
            <person name="Sugawara M."/>
            <person name="Takahashi M."/>
            <person name="Kanda K."/>
            <person name="Yokoi T."/>
            <person name="Furuya T."/>
            <person name="Kikkawa E."/>
            <person name="Omura Y."/>
            <person name="Abe K."/>
            <person name="Kamihara K."/>
            <person name="Katsuta N."/>
            <person name="Sato K."/>
            <person name="Tanikawa M."/>
            <person name="Yamazaki M."/>
            <person name="Ninomiya K."/>
            <person name="Ishibashi T."/>
            <person name="Yamashita H."/>
            <person name="Murakawa K."/>
            <person name="Fujimori K."/>
            <person name="Tanai H."/>
            <person name="Kimata M."/>
            <person name="Watanabe M."/>
            <person name="Hiraoka S."/>
            <person name="Chiba Y."/>
            <person name="Ishida S."/>
            <person name="Ono Y."/>
            <person name="Takiguchi S."/>
            <person name="Watanabe S."/>
            <person name="Yosida M."/>
            <person name="Hotuta T."/>
            <person name="Kusano J."/>
            <person name="Kanehori K."/>
            <person name="Takahashi-Fujii A."/>
            <person name="Hara H."/>
            <person name="Tanase T.-O."/>
            <person name="Nomura Y."/>
            <person name="Togiya S."/>
            <person name="Komai F."/>
            <person name="Hara R."/>
            <person name="Takeuchi K."/>
            <person name="Arita M."/>
            <person name="Imose N."/>
            <person name="Musashino K."/>
            <person name="Yuuki H."/>
            <person name="Oshima A."/>
            <person name="Sasaki N."/>
            <person name="Aotsuka S."/>
            <person name="Yoshikawa Y."/>
            <person name="Matsunawa H."/>
            <person name="Ichihara T."/>
            <person name="Shiohata N."/>
            <person name="Sano S."/>
            <person name="Moriya S."/>
            <person name="Momiyama H."/>
            <person name="Satoh N."/>
            <person name="Takami S."/>
            <person name="Terashima Y."/>
            <person name="Suzuki O."/>
            <person name="Nakagawa S."/>
            <person name="Senoh A."/>
            <person name="Mizoguchi H."/>
            <person name="Goto Y."/>
            <person name="Shimizu F."/>
            <person name="Wakebe H."/>
            <person name="Hishigaki H."/>
            <person name="Watanabe T."/>
            <person name="Sugiyama A."/>
            <person name="Takemoto M."/>
            <person name="Kawakami B."/>
            <person name="Yamazaki M."/>
            <person name="Watanabe K."/>
            <person name="Kumagai A."/>
            <person name="Itakura S."/>
            <person name="Fukuzumi Y."/>
            <person name="Fujimori Y."/>
            <person name="Komiyama M."/>
            <person name="Tashiro H."/>
            <person name="Tanigami A."/>
            <person name="Fujiwara T."/>
            <person name="Ono T."/>
            <person name="Yamada K."/>
            <person name="Fujii Y."/>
            <person name="Ozaki K."/>
            <person name="Hirao M."/>
            <person name="Ohmori Y."/>
            <person name="Kawabata A."/>
            <person name="Hikiji T."/>
            <person name="Kobatake N."/>
            <person name="Inagaki H."/>
            <person name="Ikema Y."/>
            <person name="Okamoto S."/>
            <person name="Okitani R."/>
            <person name="Kawakami T."/>
            <person name="Noguchi S."/>
            <person name="Itoh T."/>
            <person name="Shigeta K."/>
            <person name="Senba T."/>
            <person name="Matsumura K."/>
            <person name="Nakajima Y."/>
            <person name="Mizuno T."/>
            <person name="Morinaga M."/>
            <person name="Sasaki M."/>
            <person name="Togashi T."/>
            <person name="Oyama M."/>
            <person name="Hata H."/>
            <person name="Watanabe M."/>
            <person name="Komatsu T."/>
            <person name="Mizushima-Sugano J."/>
            <person name="Satoh T."/>
            <person name="Shirai Y."/>
            <person name="Takahashi Y."/>
            <person name="Nakagawa K."/>
            <person name="Okumura K."/>
            <person name="Nagase T."/>
            <person name="Nomura N."/>
            <person name="Kikuchi H."/>
            <person name="Masuho Y."/>
            <person name="Yamashita R."/>
            <person name="Nakai K."/>
            <person name="Yada T."/>
            <person name="Nakamura Y."/>
            <person name="Ohara O."/>
            <person name="Isogai T."/>
            <person name="Sugano S."/>
        </authorList>
    </citation>
    <scope>NUCLEOTIDE SEQUENCE [LARGE SCALE MRNA] (ISOFORM 7)</scope>
    <scope>NUCLEOTIDE SEQUENCE [LARGE SCALE MRNA] OF 830-2140 (ISOFORM 1)</scope>
    <scope>NUCLEOTIDE SEQUENCE [LARGE SCALE MRNA] OF 1156-2140 (ISOFORM 2)</scope>
    <scope>NUCLEOTIDE SEQUENCE [LARGE SCALE MRNA] OF 585-2140 (ISOFORM 3)</scope>
    <source>
        <tissue>Brain</tissue>
        <tissue>Mesangial cell</tissue>
        <tissue>Thalamus</tissue>
        <tissue>Thymus</tissue>
    </source>
</reference>
<reference key="3">
    <citation type="journal article" date="2006" name="Nature">
        <title>The DNA sequence and biological annotation of human chromosome 1.</title>
        <authorList>
            <person name="Gregory S.G."/>
            <person name="Barlow K.F."/>
            <person name="McLay K.E."/>
            <person name="Kaul R."/>
            <person name="Swarbreck D."/>
            <person name="Dunham A."/>
            <person name="Scott C.E."/>
            <person name="Howe K.L."/>
            <person name="Woodfine K."/>
            <person name="Spencer C.C.A."/>
            <person name="Jones M.C."/>
            <person name="Gillson C."/>
            <person name="Searle S."/>
            <person name="Zhou Y."/>
            <person name="Kokocinski F."/>
            <person name="McDonald L."/>
            <person name="Evans R."/>
            <person name="Phillips K."/>
            <person name="Atkinson A."/>
            <person name="Cooper R."/>
            <person name="Jones C."/>
            <person name="Hall R.E."/>
            <person name="Andrews T.D."/>
            <person name="Lloyd C."/>
            <person name="Ainscough R."/>
            <person name="Almeida J.P."/>
            <person name="Ambrose K.D."/>
            <person name="Anderson F."/>
            <person name="Andrew R.W."/>
            <person name="Ashwell R.I.S."/>
            <person name="Aubin K."/>
            <person name="Babbage A.K."/>
            <person name="Bagguley C.L."/>
            <person name="Bailey J."/>
            <person name="Beasley H."/>
            <person name="Bethel G."/>
            <person name="Bird C.P."/>
            <person name="Bray-Allen S."/>
            <person name="Brown J.Y."/>
            <person name="Brown A.J."/>
            <person name="Buckley D."/>
            <person name="Burton J."/>
            <person name="Bye J."/>
            <person name="Carder C."/>
            <person name="Chapman J.C."/>
            <person name="Clark S.Y."/>
            <person name="Clarke G."/>
            <person name="Clee C."/>
            <person name="Cobley V."/>
            <person name="Collier R.E."/>
            <person name="Corby N."/>
            <person name="Coville G.J."/>
            <person name="Davies J."/>
            <person name="Deadman R."/>
            <person name="Dunn M."/>
            <person name="Earthrowl M."/>
            <person name="Ellington A.G."/>
            <person name="Errington H."/>
            <person name="Frankish A."/>
            <person name="Frankland J."/>
            <person name="French L."/>
            <person name="Garner P."/>
            <person name="Garnett J."/>
            <person name="Gay L."/>
            <person name="Ghori M.R.J."/>
            <person name="Gibson R."/>
            <person name="Gilby L.M."/>
            <person name="Gillett W."/>
            <person name="Glithero R.J."/>
            <person name="Grafham D.V."/>
            <person name="Griffiths C."/>
            <person name="Griffiths-Jones S."/>
            <person name="Grocock R."/>
            <person name="Hammond S."/>
            <person name="Harrison E.S.I."/>
            <person name="Hart E."/>
            <person name="Haugen E."/>
            <person name="Heath P.D."/>
            <person name="Holmes S."/>
            <person name="Holt K."/>
            <person name="Howden P.J."/>
            <person name="Hunt A.R."/>
            <person name="Hunt S.E."/>
            <person name="Hunter G."/>
            <person name="Isherwood J."/>
            <person name="James R."/>
            <person name="Johnson C."/>
            <person name="Johnson D."/>
            <person name="Joy A."/>
            <person name="Kay M."/>
            <person name="Kershaw J.K."/>
            <person name="Kibukawa M."/>
            <person name="Kimberley A.M."/>
            <person name="King A."/>
            <person name="Knights A.J."/>
            <person name="Lad H."/>
            <person name="Laird G."/>
            <person name="Lawlor S."/>
            <person name="Leongamornlert D.A."/>
            <person name="Lloyd D.M."/>
            <person name="Loveland J."/>
            <person name="Lovell J."/>
            <person name="Lush M.J."/>
            <person name="Lyne R."/>
            <person name="Martin S."/>
            <person name="Mashreghi-Mohammadi M."/>
            <person name="Matthews L."/>
            <person name="Matthews N.S.W."/>
            <person name="McLaren S."/>
            <person name="Milne S."/>
            <person name="Mistry S."/>
            <person name="Moore M.J.F."/>
            <person name="Nickerson T."/>
            <person name="O'Dell C.N."/>
            <person name="Oliver K."/>
            <person name="Palmeiri A."/>
            <person name="Palmer S.A."/>
            <person name="Parker A."/>
            <person name="Patel D."/>
            <person name="Pearce A.V."/>
            <person name="Peck A.I."/>
            <person name="Pelan S."/>
            <person name="Phelps K."/>
            <person name="Phillimore B.J."/>
            <person name="Plumb R."/>
            <person name="Rajan J."/>
            <person name="Raymond C."/>
            <person name="Rouse G."/>
            <person name="Saenphimmachak C."/>
            <person name="Sehra H.K."/>
            <person name="Sheridan E."/>
            <person name="Shownkeen R."/>
            <person name="Sims S."/>
            <person name="Skuce C.D."/>
            <person name="Smith M."/>
            <person name="Steward C."/>
            <person name="Subramanian S."/>
            <person name="Sycamore N."/>
            <person name="Tracey A."/>
            <person name="Tromans A."/>
            <person name="Van Helmond Z."/>
            <person name="Wall M."/>
            <person name="Wallis J.M."/>
            <person name="White S."/>
            <person name="Whitehead S.L."/>
            <person name="Wilkinson J.E."/>
            <person name="Willey D.L."/>
            <person name="Williams H."/>
            <person name="Wilming L."/>
            <person name="Wray P.W."/>
            <person name="Wu Z."/>
            <person name="Coulson A."/>
            <person name="Vaudin M."/>
            <person name="Sulston J.E."/>
            <person name="Durbin R.M."/>
            <person name="Hubbard T."/>
            <person name="Wooster R."/>
            <person name="Dunham I."/>
            <person name="Carter N.P."/>
            <person name="McVean G."/>
            <person name="Ross M.T."/>
            <person name="Harrow J."/>
            <person name="Olson M.V."/>
            <person name="Beck S."/>
            <person name="Rogers J."/>
            <person name="Bentley D.R."/>
        </authorList>
    </citation>
    <scope>NUCLEOTIDE SEQUENCE [LARGE SCALE GENOMIC DNA]</scope>
</reference>
<reference key="4">
    <citation type="submission" date="2005-09" db="EMBL/GenBank/DDBJ databases">
        <authorList>
            <person name="Mural R.J."/>
            <person name="Istrail S."/>
            <person name="Sutton G."/>
            <person name="Florea L."/>
            <person name="Halpern A.L."/>
            <person name="Mobarry C.M."/>
            <person name="Lippert R."/>
            <person name="Walenz B."/>
            <person name="Shatkay H."/>
            <person name="Dew I."/>
            <person name="Miller J.R."/>
            <person name="Flanigan M.J."/>
            <person name="Edwards N.J."/>
            <person name="Bolanos R."/>
            <person name="Fasulo D."/>
            <person name="Halldorsson B.V."/>
            <person name="Hannenhalli S."/>
            <person name="Turner R."/>
            <person name="Yooseph S."/>
            <person name="Lu F."/>
            <person name="Nusskern D.R."/>
            <person name="Shue B.C."/>
            <person name="Zheng X.H."/>
            <person name="Zhong F."/>
            <person name="Delcher A.L."/>
            <person name="Huson D.H."/>
            <person name="Kravitz S.A."/>
            <person name="Mouchard L."/>
            <person name="Reinert K."/>
            <person name="Remington K.A."/>
            <person name="Clark A.G."/>
            <person name="Waterman M.S."/>
            <person name="Eichler E.E."/>
            <person name="Adams M.D."/>
            <person name="Hunkapiller M.W."/>
            <person name="Myers E.W."/>
            <person name="Venter J.C."/>
        </authorList>
    </citation>
    <scope>NUCLEOTIDE SEQUENCE [LARGE SCALE GENOMIC DNA]</scope>
</reference>
<reference key="5">
    <citation type="submission" date="2005-07" db="EMBL/GenBank/DDBJ databases">
        <title>Molecular characterization of human Dock7.</title>
        <authorList>
            <person name="Yamauchi J."/>
            <person name="Miyamoto Y."/>
            <person name="Takashima S."/>
            <person name="Tanoue A."/>
        </authorList>
    </citation>
    <scope>NUCLEOTIDE SEQUENCE [MRNA] OF 109-2140 (ISOFORMS 3 AND 4)</scope>
    <source>
        <tissue>Brain</tissue>
    </source>
</reference>
<reference key="6">
    <citation type="journal article" date="2000" name="DNA Res.">
        <title>Prediction of the coding sequences of unidentified human genes. XIX. The complete sequences of 100 new cDNA clones from brain which code for large proteins in vitro.</title>
        <authorList>
            <person name="Nagase T."/>
            <person name="Kikuno R."/>
            <person name="Hattori A."/>
            <person name="Kondo Y."/>
            <person name="Okumura K."/>
            <person name="Ohara O."/>
        </authorList>
    </citation>
    <scope>NUCLEOTIDE SEQUENCE [LARGE SCALE MRNA] OF 830-2140 (ISOFORM 1)</scope>
    <scope>TISSUE SPECIFICITY</scope>
    <source>
        <tissue>Brain</tissue>
    </source>
</reference>
<reference key="7">
    <citation type="journal article" date="2004" name="Genome Res.">
        <title>The status, quality, and expansion of the NIH full-length cDNA project: the Mammalian Gene Collection (MGC).</title>
        <authorList>
            <consortium name="The MGC Project Team"/>
        </authorList>
    </citation>
    <scope>NUCLEOTIDE SEQUENCE [LARGE SCALE MRNA] OF 1332-2140 (ISOFORM 2)</scope>
    <source>
        <tissue>Ovary</tissue>
    </source>
</reference>
<reference key="8">
    <citation type="journal article" date="2002" name="J. Cell Sci.">
        <title>Identification of an evolutionarily conserved superfamily of DOCK180-related proteins with guanine nucleotide exchange activity.</title>
        <authorList>
            <person name="Cote J.-F."/>
            <person name="Vuori K."/>
        </authorList>
    </citation>
    <scope>NOMENCLATURE</scope>
</reference>
<reference key="9">
    <citation type="journal article" date="2003" name="Nature">
        <title>Proteomic characterization of the human centrosome by protein correlation profiling.</title>
        <authorList>
            <person name="Andersen J.S."/>
            <person name="Wilkinson C.J."/>
            <person name="Mayor T."/>
            <person name="Mortensen P."/>
            <person name="Nigg E.A."/>
            <person name="Mann M."/>
        </authorList>
    </citation>
    <scope>IDENTIFICATION BY MASS SPECTROMETRY</scope>
    <source>
        <tissue>Lymphoblast</tissue>
    </source>
</reference>
<reference key="10">
    <citation type="journal article" date="2005" name="Biochem. Biophys. Res. Commun.">
        <title>Phosphorylation and binding partner analysis of the TSC1-TSC2 complex.</title>
        <authorList>
            <person name="Nellist M."/>
            <person name="Burgers P.C."/>
            <person name="van den Ouweland A.M.W."/>
            <person name="Halley D.J.J."/>
            <person name="Luider T.M."/>
        </authorList>
    </citation>
    <scope>INTERACTION WITH TSC1</scope>
    <scope>IDENTIFICATION BY MASS SPECTROMETRY</scope>
</reference>
<reference key="11">
    <citation type="journal article" date="2007" name="Science">
        <title>ATM and ATR substrate analysis reveals extensive protein networks responsive to DNA damage.</title>
        <authorList>
            <person name="Matsuoka S."/>
            <person name="Ballif B.A."/>
            <person name="Smogorzewska A."/>
            <person name="McDonald E.R. III"/>
            <person name="Hurov K.E."/>
            <person name="Luo J."/>
            <person name="Bakalarski C.E."/>
            <person name="Zhao Z."/>
            <person name="Solimini N."/>
            <person name="Lerenthal Y."/>
            <person name="Shiloh Y."/>
            <person name="Gygi S.P."/>
            <person name="Elledge S.J."/>
        </authorList>
    </citation>
    <scope>PHOSPHORYLATION [LARGE SCALE ANALYSIS] AT SER-1429 (ISOFORMS 2 AND 6)</scope>
    <scope>PHOSPHORYLATION [LARGE SCALE ANALYSIS] AT SER-1398 (ISOFORMS 3 AND 4)</scope>
    <scope>IDENTIFICATION BY MASS SPECTROMETRY [LARGE SCALE ANALYSIS]</scope>
    <source>
        <tissue>Embryonic kidney</tissue>
    </source>
</reference>
<reference key="12">
    <citation type="journal article" date="2008" name="Proc. Natl. Acad. Sci. U.S.A.">
        <title>A quantitative atlas of mitotic phosphorylation.</title>
        <authorList>
            <person name="Dephoure N."/>
            <person name="Zhou C."/>
            <person name="Villen J."/>
            <person name="Beausoleil S.A."/>
            <person name="Bakalarski C.E."/>
            <person name="Elledge S.J."/>
            <person name="Gygi S.P."/>
        </authorList>
    </citation>
    <scope>PHOSPHORYLATION [LARGE SCALE ANALYSIS] AT SER-30; SER-180; SER-182; SER-882; SER-888; SER-900; THR-907; SER-910; SER-1383 AND SER-1432</scope>
    <scope>PHOSPHORYLATION [LARGE SCALE ANALYSIS] AT SER-1421; SER-1425 AND SER-1429 (ISOFORMS 2 AND 6)</scope>
    <scope>PHOSPHORYLATION [LARGE SCALE ANALYSIS] AT SER-1390; SER-1394 AND SER-1398 (ISOFORMS 3 AND 4)</scope>
    <scope>IDENTIFICATION BY MASS SPECTROMETRY [LARGE SCALE ANALYSIS]</scope>
    <source>
        <tissue>Cervix carcinoma</tissue>
    </source>
</reference>
<reference key="13">
    <citation type="journal article" date="2009" name="Anal. Chem.">
        <title>Lys-N and trypsin cover complementary parts of the phosphoproteome in a refined SCX-based approach.</title>
        <authorList>
            <person name="Gauci S."/>
            <person name="Helbig A.O."/>
            <person name="Slijper M."/>
            <person name="Krijgsveld J."/>
            <person name="Heck A.J."/>
            <person name="Mohammed S."/>
        </authorList>
    </citation>
    <scope>IDENTIFICATION BY MASS SPECTROMETRY [LARGE SCALE ANALYSIS]</scope>
</reference>
<reference key="14">
    <citation type="journal article" date="2009" name="Mol. Cell. Proteomics">
        <title>Large-scale proteomics analysis of the human kinome.</title>
        <authorList>
            <person name="Oppermann F.S."/>
            <person name="Gnad F."/>
            <person name="Olsen J.V."/>
            <person name="Hornberger R."/>
            <person name="Greff Z."/>
            <person name="Keri G."/>
            <person name="Mann M."/>
            <person name="Daub H."/>
        </authorList>
    </citation>
    <scope>IDENTIFICATION BY MASS SPECTROMETRY [LARGE SCALE ANALYSIS]</scope>
</reference>
<reference key="15">
    <citation type="journal article" date="2009" name="Sci. Signal.">
        <title>Quantitative phosphoproteomic analysis of T cell receptor signaling reveals system-wide modulation of protein-protein interactions.</title>
        <authorList>
            <person name="Mayya V."/>
            <person name="Lundgren D.H."/>
            <person name="Hwang S.-I."/>
            <person name="Rezaul K."/>
            <person name="Wu L."/>
            <person name="Eng J.K."/>
            <person name="Rodionov V."/>
            <person name="Han D.K."/>
        </authorList>
    </citation>
    <scope>PHOSPHORYLATION [LARGE SCALE ANALYSIS] AT SER-180; SER-896; SER-900; SER-905; THR-907; THR-909; SER-910 AND SER-1438</scope>
    <scope>IDENTIFICATION BY MASS SPECTROMETRY [LARGE SCALE ANALYSIS]</scope>
    <source>
        <tissue>Leukemic T-cell</tissue>
    </source>
</reference>
<reference key="16">
    <citation type="journal article" date="2009" name="Science">
        <title>Lysine acetylation targets protein complexes and co-regulates major cellular functions.</title>
        <authorList>
            <person name="Choudhary C."/>
            <person name="Kumar C."/>
            <person name="Gnad F."/>
            <person name="Nielsen M.L."/>
            <person name="Rehman M."/>
            <person name="Walther T.C."/>
            <person name="Olsen J.V."/>
            <person name="Mann M."/>
        </authorList>
    </citation>
    <scope>ACETYLATION [LARGE SCALE ANALYSIS] AT LYS-1962</scope>
    <scope>IDENTIFICATION BY MASS SPECTROMETRY [LARGE SCALE ANALYSIS]</scope>
</reference>
<reference key="17">
    <citation type="journal article" date="2010" name="Sci. Signal.">
        <title>Quantitative phosphoproteomics reveals widespread full phosphorylation site occupancy during mitosis.</title>
        <authorList>
            <person name="Olsen J.V."/>
            <person name="Vermeulen M."/>
            <person name="Santamaria A."/>
            <person name="Kumar C."/>
            <person name="Miller M.L."/>
            <person name="Jensen L.J."/>
            <person name="Gnad F."/>
            <person name="Cox J."/>
            <person name="Jensen T.S."/>
            <person name="Nigg E.A."/>
            <person name="Brunak S."/>
            <person name="Mann M."/>
        </authorList>
    </citation>
    <scope>PHOSPHORYLATION [LARGE SCALE ANALYSIS] AT SER-30; SER-180; SER-182 AND SER-1430</scope>
    <scope>IDENTIFICATION BY MASS SPECTROMETRY [LARGE SCALE ANALYSIS]</scope>
    <source>
        <tissue>Cervix carcinoma</tissue>
    </source>
</reference>
<reference key="18">
    <citation type="journal article" date="2011" name="BMC Syst. Biol.">
        <title>Initial characterization of the human central proteome.</title>
        <authorList>
            <person name="Burkard T.R."/>
            <person name="Planyavsky M."/>
            <person name="Kaupe I."/>
            <person name="Breitwieser F.P."/>
            <person name="Buerckstuemmer T."/>
            <person name="Bennett K.L."/>
            <person name="Superti-Furga G."/>
            <person name="Colinge J."/>
        </authorList>
    </citation>
    <scope>IDENTIFICATION BY MASS SPECTROMETRY [LARGE SCALE ANALYSIS]</scope>
</reference>
<reference key="19">
    <citation type="journal article" date="2011" name="Sci. Signal.">
        <title>System-wide temporal characterization of the proteome and phosphoproteome of human embryonic stem cell differentiation.</title>
        <authorList>
            <person name="Rigbolt K.T."/>
            <person name="Prokhorova T.A."/>
            <person name="Akimov V."/>
            <person name="Henningsen J."/>
            <person name="Johansen P.T."/>
            <person name="Kratchmarova I."/>
            <person name="Kassem M."/>
            <person name="Mann M."/>
            <person name="Olsen J.V."/>
            <person name="Blagoev B."/>
        </authorList>
    </citation>
    <scope>PHOSPHORYLATION [LARGE SCALE ANALYSIS] AT SER-1383</scope>
    <scope>IDENTIFICATION BY MASS SPECTROMETRY [LARGE SCALE ANALYSIS]</scope>
</reference>
<reference key="20">
    <citation type="journal article" date="2013" name="J. Proteome Res.">
        <title>Toward a comprehensive characterization of a human cancer cell phosphoproteome.</title>
        <authorList>
            <person name="Zhou H."/>
            <person name="Di Palma S."/>
            <person name="Preisinger C."/>
            <person name="Peng M."/>
            <person name="Polat A.N."/>
            <person name="Heck A.J."/>
            <person name="Mohammed S."/>
        </authorList>
    </citation>
    <scope>PHOSPHORYLATION [LARGE SCALE ANALYSIS] AT SER-180; SER-182; SER-452; THR-907; SER-929; SER-964; SER-1383; SER-1432; SER-1438 AND SER-2129</scope>
    <scope>IDENTIFICATION BY MASS SPECTROMETRY [LARGE SCALE ANALYSIS]</scope>
    <source>
        <tissue>Cervix carcinoma</tissue>
        <tissue>Erythroleukemia</tissue>
    </source>
</reference>
<reference key="21">
    <citation type="journal article" date="2014" name="Am. J. Hum. Genet.">
        <title>Mutations in DOCK7 in individuals with epileptic encephalopathy and cortical blindness.</title>
        <authorList>
            <person name="Perrault I."/>
            <person name="Hamdan F.F."/>
            <person name="Rio M."/>
            <person name="Capo-Chichi J.M."/>
            <person name="Boddaert N."/>
            <person name="Decarie J.C."/>
            <person name="Maranda B."/>
            <person name="Nabbout R."/>
            <person name="Sylvain M."/>
            <person name="Lortie A."/>
            <person name="Roux P.P."/>
            <person name="Rossignol E."/>
            <person name="Gerard X."/>
            <person name="Barcia G."/>
            <person name="Berquin P."/>
            <person name="Munnich A."/>
            <person name="Rouleau G.A."/>
            <person name="Kaplan J."/>
            <person name="Rozet J.M."/>
            <person name="Michaud J.L."/>
        </authorList>
    </citation>
    <scope>INVOLVEMENT IN DEE23</scope>
</reference>
<reference key="22">
    <citation type="journal article" date="2014" name="J. Proteomics">
        <title>An enzyme assisted RP-RPLC approach for in-depth analysis of human liver phosphoproteome.</title>
        <authorList>
            <person name="Bian Y."/>
            <person name="Song C."/>
            <person name="Cheng K."/>
            <person name="Dong M."/>
            <person name="Wang F."/>
            <person name="Huang J."/>
            <person name="Sun D."/>
            <person name="Wang L."/>
            <person name="Ye M."/>
            <person name="Zou H."/>
        </authorList>
    </citation>
    <scope>PHOSPHORYLATION [LARGE SCALE ANALYSIS] AT SER-888</scope>
    <scope>IDENTIFICATION BY MASS SPECTROMETRY [LARGE SCALE ANALYSIS]</scope>
    <source>
        <tissue>Liver</tissue>
    </source>
</reference>
<reference key="23">
    <citation type="journal article" date="2014" name="Mol. Cell. Proteomics">
        <title>Immunoaffinity enrichment and mass spectrometry analysis of protein methylation.</title>
        <authorList>
            <person name="Guo A."/>
            <person name="Gu H."/>
            <person name="Zhou J."/>
            <person name="Mulhern D."/>
            <person name="Wang Y."/>
            <person name="Lee K.A."/>
            <person name="Yang V."/>
            <person name="Aguiar M."/>
            <person name="Kornhauser J."/>
            <person name="Jia X."/>
            <person name="Ren J."/>
            <person name="Beausoleil S.A."/>
            <person name="Silva J.C."/>
            <person name="Vemulapalli V."/>
            <person name="Bedford M.T."/>
            <person name="Comb M.J."/>
        </authorList>
    </citation>
    <scope>METHYLATION [LARGE SCALE ANALYSIS] AT LYS-381</scope>
    <scope>IDENTIFICATION BY MASS SPECTROMETRY [LARGE SCALE ANALYSIS]</scope>
    <source>
        <tissue>Colon carcinoma</tissue>
    </source>
</reference>
<reference key="24">
    <citation type="journal article" date="2016" name="PLoS ONE">
        <title>Characterization and Genetic Analyses of New Genes Coding for NOD2 Interacting Proteins.</title>
        <authorList>
            <person name="Thiebaut R."/>
            <person name="Esmiol S."/>
            <person name="Lecine P."/>
            <person name="Mahfouz B."/>
            <person name="Hermant A."/>
            <person name="Nicoletti C."/>
            <person name="Parnis S."/>
            <person name="Perroy J."/>
            <person name="Borg J.P."/>
            <person name="Pascoe L."/>
            <person name="Hugot J.P."/>
            <person name="Ollendorff V."/>
        </authorList>
    </citation>
    <scope>INTERACTION WITH NOD2</scope>
</reference>
<reference key="25">
    <citation type="journal article" date="2018" name="EMBO Rep.">
        <title>The MYO6 interactome reveals adaptor complexes coordinating early endosome and cytoskeletal dynamics.</title>
        <authorList>
            <person name="O'Loughlin T."/>
            <person name="Masters T.A."/>
            <person name="Buss F."/>
        </authorList>
    </citation>
    <scope>FUNCTION</scope>
    <scope>IDENTIFICATION IN DISP COMPLEX</scope>
</reference>
<comment type="function">
    <text evidence="1 8 11">Functions as a guanine nucleotide exchange factor (GEF), which activates Rac1 and Rac3 Rho small GTPases by exchanging bound GDP for free GTP. Does not have a GEF activity for CDC42. Required for STMN1 'Ser-15' phosphorylation during axon formation and consequently for neuronal polarization (PubMed:16982419). As part of the DISP complex, may regulate the association of septins with actin and thereby regulate the actin cytoskeleton (PubMed:29467281). Has a role in pigmentation (By similarity). Involved in the regulation of cortical neurogenesis through the control of radial glial cells (RGCs) proliferation versus differentiation; negatively regulates the basal-to-apical interkinetic nuclear migration of RGCs by antagonizing the microtubule growth-promoting function of TACC3 (By similarity).</text>
</comment>
<comment type="subunit">
    <text evidence="1 7 8 10 11">Component of the DOCK7-induced septin displacement/DISP complex, at least composed of DOCK7, LRCH3 and MYO6 (PubMed:29467281). Interacts with TSC1. Interacts with nucleotide-free RAC1 and RAC3. Interacts with TACC3 and CRY1 (By similarity). Interacts with NOD2 (PubMed:27812135).</text>
</comment>
<comment type="interaction">
    <interactant intactId="EBI-2433703">
        <id>Q96N67</id>
    </interactant>
    <interactant intactId="EBI-2797324">
        <id>Q9Y2L9</id>
        <label>LRCH1</label>
    </interactant>
    <organismsDiffer>false</organismsDiffer>
    <experiments>6</experiments>
</comment>
<comment type="interaction">
    <interactant intactId="EBI-2433703">
        <id>Q96N67</id>
    </interactant>
    <interactant intactId="EBI-8795942">
        <id>Q96II8</id>
        <label>LRCH3</label>
    </interactant>
    <organismsDiffer>false</organismsDiffer>
    <experiments>13</experiments>
</comment>
<comment type="interaction">
    <interactant intactId="EBI-2433703">
        <id>Q96N67</id>
    </interactant>
    <interactant intactId="EBI-718707">
        <id>O75427</id>
        <label>LRCH4</label>
    </interactant>
    <organismsDiffer>false</organismsDiffer>
    <experiments>2</experiments>
</comment>
<comment type="interaction">
    <interactant intactId="EBI-2433703">
        <id>Q96N67</id>
    </interactant>
    <interactant intactId="EBI-2862306">
        <id>Q6ZNJ1</id>
        <label>NBEAL2</label>
    </interactant>
    <organismsDiffer>false</organismsDiffer>
    <experiments>8</experiments>
</comment>
<comment type="interaction">
    <interactant intactId="EBI-2433703">
        <id>Q96N67</id>
    </interactant>
    <interactant intactId="EBI-7445625">
        <id>Q9HC29</id>
        <label>NOD2</label>
    </interactant>
    <organismsDiffer>false</organismsDiffer>
    <experiments>5</experiments>
</comment>
<comment type="interaction">
    <interactant intactId="EBI-2433703">
        <id>Q96N67</id>
    </interactant>
    <interactant intactId="EBI-357515">
        <id>O15027</id>
        <label>SEC16A</label>
    </interactant>
    <organismsDiffer>false</organismsDiffer>
    <experiments>3</experiments>
</comment>
<comment type="subcellular location">
    <subcellularLocation>
        <location evidence="8">Cell projection</location>
        <location evidence="8">Axon</location>
    </subcellularLocation>
    <text>Enriched in the developing axons of hippocampal neurons.</text>
</comment>
<comment type="alternative products">
    <event type="alternative splicing"/>
    <isoform>
        <id>Q96N67-1</id>
        <name>1</name>
        <sequence type="displayed"/>
    </isoform>
    <isoform>
        <id>Q96N67-2</id>
        <name>2</name>
        <sequence type="described" ref="VSP_022240 VSP_007707"/>
    </isoform>
    <isoform>
        <id>Q96N67-3</id>
        <name>3</name>
        <sequence type="described" ref="VSP_012440 VSP_022240"/>
    </isoform>
    <isoform>
        <id>Q96N67-4</id>
        <name>4</name>
        <sequence type="described" ref="VSP_012440 VSP_022240 VSP_007707"/>
    </isoform>
    <isoform>
        <id>Q96N67-5</id>
        <name>5</name>
        <sequence type="described" ref="VSP_012440"/>
    </isoform>
    <isoform>
        <id>Q96N67-6</id>
        <name>6</name>
        <sequence type="described" ref="VSP_022240"/>
    </isoform>
    <isoform>
        <id>Q96N67-7</id>
        <name>7</name>
        <sequence type="described" ref="VSP_054534 VSP_054535"/>
    </isoform>
</comment>
<comment type="tissue specificity">
    <text evidence="6">Widely expressed.</text>
</comment>
<comment type="domain">
    <text evidence="8">The DOCKER domain mediates GEF activity.</text>
</comment>
<comment type="disease" evidence="9">
    <disease id="DI-04135">
        <name>Developmental and epileptic encephalopathy 23</name>
        <acronym>DEE23</acronym>
        <description>A severe disease characterized by early-onset intractable epilepsy, dysmorphic features, intellectual disability, and cortical blindness. Brain imaging shows an abnormally marked pontobulbar sulcus with mild pontine hypoplasia, white matter abnormalities, and atrophy in the occipital lobe.</description>
        <dbReference type="MIM" id="615859"/>
    </disease>
    <text>The disease is caused by variants affecting the gene represented in this entry.</text>
</comment>
<comment type="similarity">
    <text evidence="3">Belongs to the DOCK family.</text>
</comment>
<comment type="sequence caution" evidence="16">
    <conflict type="frameshift">
        <sequence resource="EMBL-CDS" id="AAH16392"/>
    </conflict>
</comment>
<comment type="sequence caution" evidence="16">
    <conflict type="frameshift">
        <sequence resource="EMBL-CDS" id="ABC33725"/>
    </conflict>
</comment>
<comment type="sequence caution" evidence="16">
    <conflict type="erroneous initiation">
        <sequence resource="EMBL-CDS" id="BAB70933"/>
    </conflict>
    <text>Truncated N-terminus.</text>
</comment>
<comment type="sequence caution" evidence="16">
    <conflict type="frameshift">
        <sequence resource="EMBL-CDS" id="BAB71042"/>
    </conflict>
</comment>
<comment type="sequence caution" evidence="16">
    <conflict type="erroneous initiation">
        <sequence resource="EMBL-CDS" id="BAC86032"/>
    </conflict>
    <text>Truncated N-terminus.</text>
</comment>
<organism>
    <name type="scientific">Homo sapiens</name>
    <name type="common">Human</name>
    <dbReference type="NCBI Taxonomy" id="9606"/>
    <lineage>
        <taxon>Eukaryota</taxon>
        <taxon>Metazoa</taxon>
        <taxon>Chordata</taxon>
        <taxon>Craniata</taxon>
        <taxon>Vertebrata</taxon>
        <taxon>Euteleostomi</taxon>
        <taxon>Mammalia</taxon>
        <taxon>Eutheria</taxon>
        <taxon>Euarchontoglires</taxon>
        <taxon>Primates</taxon>
        <taxon>Haplorrhini</taxon>
        <taxon>Catarrhini</taxon>
        <taxon>Hominidae</taxon>
        <taxon>Homo</taxon>
    </lineage>
</organism>
<sequence>MAERRAFAQKISRTVAAEVRKQISGQYSGSPQLLKNLNIVGNISHHTTVPLTEAVDPVDLEDYLITHPLAVDSGPLRDLIEFPPDDIEVVYSPRDCRTLVSAVPEESEMDPHVRDCIRSYTEDWAIVIRKYHKLGTGFNPNTLDKQKERQKGLPKQVFESDEAPDGNSYQDDQDDLKRRSMSIDDTPRGSWACSIFDLKNSLPDALLPNLLDRTPNEEIDRQNDDQRKSNRHKELFALHPSPDEEEPIERLSVPDIPKEHFGQRLLVKCLSLKFEIEIEPIFASLALYDVKEKKKISENFYFDLNSEQMKGLLRPHVPPAAITTLARSAIFSITYPSQDVFLVIKLEKVLQQGDIGECAEPYMIFKEADATKNKEKLEKLKSQADQFCQRLGKYRMPFAWTAIHLMNIVSSAGSLERDSTEVEISTGERKGSWSERRNSSIVGRRSLERTTSGDDACNLTSFRPATLTVTNFFKQEGDRLSDEDLYKFLADMRRPSSVLRRLRPITAQLKIDISPAPENPHYCLTPELLQVKLYPDSRVRPTREILEFPARDVYVPNTTYRNLLYIYPQSLNFANRQGSARNITVKVQFMYGEDPSNAMPVIFGKSSCSEFSKEAYTAVVYHNRSPDFHEEIKVKLPATLTDHHHLLFTFYHVSCQQKQNTPLETPVGYTWIPMLQNGRLKTGQFCLPVSLEKPPQAYSVLSPEVPLPGMKWVDNHKGVFNVEVVAVSSIHTQDPYLDKFFALVNALDEHLFPVRIGDMRIMENNLENELKSSISALNSSQLEPVVRFLHLLLDKLILLVIRPPVIAGQIVNLGQASFEAMASIINRLHKNLEGNHDQHGRNSLLASYIHYVFRLPNTYPNSSSPGPGGLGGSVHYATMARSAVRPASLNLNRSRSLSNSNPDISGTPTSPDDEVRSIIGSKGLDRSNSWVNTGGPKAAPWGSNPSPSAESTQAMDRSCNRMSSHTETSSFLQTLTGRLPTKKLFHEELALQWVVCSGSVRESALQQAWFFFELMVKSMVHHLYFNDKLEAPRKSRFPERFMDDIAALVSTIASDIVSRFQKDTEMVERLNTSLAFFLNDLLSVMDRGFVFSLIKSCYKQVSSKLYSLPNPSVLVSLRLDFLRIICSHEHYVTLNLPCSLLTPPASPSPSVSSATSQSSGFSTNVQDQKIANMFELSVPFRQQHYLAGLVLTELAVILDPDAEGLFGLHKKVINMVHNLLSSHDSDPRYSDPQIKARVAMLYLPLIGIIMETVPQLYDFTETHNQRGRPICIATDDYESESGSMISQTVAMAIAGTSVPQLTRPGSFLLTSTSGRQHTTFSAESSRSLLICLLWVLKNADETVLQKWFTDLSVLQLNRLLDLLYLCVSCFEYKGKKVFERMNSLTFKKSKDMRAKLEEAILGSIGARQEMVRRSRGQLGTYTIASPPERSPSGSAFGSQENLRWRKDMTHWRQNTEKLDKSRAEIEHEALIDGNLATEANLIILDTLEIVVQTVSVTESKESILGGVLKVLLHSMACNQSAVYLQHCFATQRALVSKFPELLFEEETEQCADLCLRLLRHCSSSIGTIRSHASASLYLLMRQNFEIGNNFARVKMQVTMSLSSLVGTSQNFNEEFLRRSLKTILTYAEEDLELRETTFPDQVQDLVFNLHMILSDTVKMKEHQEDPEMLIDLMYRIAKGYQTSPDLRLTWLQNMAGKHSERSNHAEAAQCLVHSAALVAEYLSMLEDRKYLPVGCVTFQNISSNVLEESAVSDDVVSPDEEGICSGKYFTESGLVGLLEQAAASFSMAGMYEAVNEVYKVLIPIHEANRDAKKLSTIHGKLQEAFSKIVHQSTGWERMFGTYFRVGFYGTKFGDLDEQEFVYKEPAITKLAEISHRLEGFYGERFGEDVVEVIKDSNPVDKCKLDPNKAYIQITYVEPYFDTYEMKDRITYFDKNYNLRRFMYCTPFTLDGRAHGELHEQFKRKTILTTSHAFPYIKTRVNVTHKEEIILTPIEVAIEDMQKKTQELAFATHQDPADPKMLQMVLQGSVGTTVNQGPLEVAQVFLSEIPSDPKLFRHHNKLRLCFKDFTKRCEDALRKNKSLIGPDQKEYQRELERNYHRLKEALQPLINRKIPQLYKAVLPVTCHRDSFSRMSLRKMDL</sequence>
<evidence type="ECO:0000250" key="1">
    <source>
        <dbReference type="UniProtKB" id="Q8R1A4"/>
    </source>
</evidence>
<evidence type="ECO:0000255" key="2"/>
<evidence type="ECO:0000255" key="3">
    <source>
        <dbReference type="PROSITE-ProRule" id="PRU00983"/>
    </source>
</evidence>
<evidence type="ECO:0000255" key="4">
    <source>
        <dbReference type="PROSITE-ProRule" id="PRU00984"/>
    </source>
</evidence>
<evidence type="ECO:0000256" key="5">
    <source>
        <dbReference type="SAM" id="MobiDB-lite"/>
    </source>
</evidence>
<evidence type="ECO:0000269" key="6">
    <source>
    </source>
</evidence>
<evidence type="ECO:0000269" key="7">
    <source>
    </source>
</evidence>
<evidence type="ECO:0000269" key="8">
    <source>
    </source>
</evidence>
<evidence type="ECO:0000269" key="9">
    <source>
    </source>
</evidence>
<evidence type="ECO:0000269" key="10">
    <source>
    </source>
</evidence>
<evidence type="ECO:0000269" key="11">
    <source>
    </source>
</evidence>
<evidence type="ECO:0000303" key="12">
    <source>
    </source>
</evidence>
<evidence type="ECO:0000303" key="13">
    <source>
    </source>
</evidence>
<evidence type="ECO:0000303" key="14">
    <source>
    </source>
</evidence>
<evidence type="ECO:0000303" key="15">
    <source ref="5"/>
</evidence>
<evidence type="ECO:0000305" key="16"/>
<evidence type="ECO:0007744" key="17">
    <source>
    </source>
</evidence>
<evidence type="ECO:0007744" key="18">
    <source>
    </source>
</evidence>
<evidence type="ECO:0007744" key="19">
    <source>
    </source>
</evidence>
<evidence type="ECO:0007744" key="20">
    <source>
    </source>
</evidence>
<evidence type="ECO:0007744" key="21">
    <source>
    </source>
</evidence>
<evidence type="ECO:0007744" key="22">
    <source>
    </source>
</evidence>
<evidence type="ECO:0007744" key="23">
    <source>
    </source>
</evidence>
<evidence type="ECO:0007744" key="24">
    <source>
    </source>
</evidence>
<evidence type="ECO:0007744" key="25">
    <source>
    </source>
</evidence>
<evidence type="ECO:0007829" key="26">
    <source>
        <dbReference type="PDB" id="6AJ4"/>
    </source>
</evidence>
<evidence type="ECO:0007829" key="27">
    <source>
        <dbReference type="PDB" id="6AJL"/>
    </source>
</evidence>
<name>DOCK7_HUMAN</name>
<keyword id="KW-0002">3D-structure</keyword>
<keyword id="KW-0007">Acetylation</keyword>
<keyword id="KW-0025">Alternative splicing</keyword>
<keyword id="KW-0966">Cell projection</keyword>
<keyword id="KW-0175">Coiled coil</keyword>
<keyword id="KW-0217">Developmental protein</keyword>
<keyword id="KW-0221">Differentiation</keyword>
<keyword id="KW-0887">Epilepsy</keyword>
<keyword id="KW-0344">Guanine-nucleotide releasing factor</keyword>
<keyword id="KW-0488">Methylation</keyword>
<keyword id="KW-0524">Neurogenesis</keyword>
<keyword id="KW-0597">Phosphoprotein</keyword>
<keyword id="KW-1267">Proteomics identification</keyword>
<keyword id="KW-1185">Reference proteome</keyword>
<accession>Q96N67</accession>
<accession>Q00M63</accession>
<accession>Q2PPY7</accession>
<accession>Q45RE8</accession>
<accession>Q45RE9</accession>
<accession>Q5T1B9</accession>
<accession>Q5T1C0</accession>
<accession>Q6ZV32</accession>
<accession>Q8TB82</accession>
<accession>Q96NG6</accession>
<accession>Q96NI0</accession>
<accession>Q9C092</accession>
<protein>
    <recommendedName>
        <fullName>Dedicator of cytokinesis protein 7</fullName>
    </recommendedName>
</protein>